<sequence length="80" mass="9350">MKRILIALVRFYQRFISPVFPPSCRFELTCSNYMIQAIEKHGFKGVLMGLARILRCHPWSKTGKDPIPDHFSLKRNQEGE</sequence>
<organism>
    <name type="scientific">Streptococcus pneumoniae (strain CGSP14)</name>
    <dbReference type="NCBI Taxonomy" id="516950"/>
    <lineage>
        <taxon>Bacteria</taxon>
        <taxon>Bacillati</taxon>
        <taxon>Bacillota</taxon>
        <taxon>Bacilli</taxon>
        <taxon>Lactobacillales</taxon>
        <taxon>Streptococcaceae</taxon>
        <taxon>Streptococcus</taxon>
    </lineage>
</organism>
<proteinExistence type="inferred from homology"/>
<protein>
    <recommendedName>
        <fullName evidence="1">Putative membrane protein insertion efficiency factor</fullName>
    </recommendedName>
</protein>
<keyword id="KW-1003">Cell membrane</keyword>
<keyword id="KW-0472">Membrane</keyword>
<dbReference type="EMBL" id="CP001033">
    <property type="protein sequence ID" value="ACB91098.1"/>
    <property type="molecule type" value="Genomic_DNA"/>
</dbReference>
<dbReference type="RefSeq" id="WP_000821614.1">
    <property type="nucleotide sequence ID" value="NC_010582.1"/>
</dbReference>
<dbReference type="KEGG" id="spw:SPCG_1846"/>
<dbReference type="HOGENOM" id="CLU_144811_5_2_9"/>
<dbReference type="GO" id="GO:0005886">
    <property type="term" value="C:plasma membrane"/>
    <property type="evidence" value="ECO:0007669"/>
    <property type="project" value="UniProtKB-SubCell"/>
</dbReference>
<dbReference type="HAMAP" id="MF_00386">
    <property type="entry name" value="UPF0161_YidD"/>
    <property type="match status" value="1"/>
</dbReference>
<dbReference type="InterPro" id="IPR002696">
    <property type="entry name" value="Membr_insert_effic_factor_YidD"/>
</dbReference>
<dbReference type="NCBIfam" id="TIGR00278">
    <property type="entry name" value="membrane protein insertion efficiency factor YidD"/>
    <property type="match status" value="1"/>
</dbReference>
<dbReference type="PANTHER" id="PTHR33383">
    <property type="entry name" value="MEMBRANE PROTEIN INSERTION EFFICIENCY FACTOR-RELATED"/>
    <property type="match status" value="1"/>
</dbReference>
<dbReference type="PANTHER" id="PTHR33383:SF1">
    <property type="entry name" value="MEMBRANE PROTEIN INSERTION EFFICIENCY FACTOR-RELATED"/>
    <property type="match status" value="1"/>
</dbReference>
<dbReference type="Pfam" id="PF01809">
    <property type="entry name" value="YidD"/>
    <property type="match status" value="1"/>
</dbReference>
<dbReference type="SMART" id="SM01234">
    <property type="entry name" value="Haemolytic"/>
    <property type="match status" value="1"/>
</dbReference>
<reference key="1">
    <citation type="journal article" date="2009" name="BMC Genomics">
        <title>Genome evolution driven by host adaptations results in a more virulent and antimicrobial-resistant Streptococcus pneumoniae serotype 14.</title>
        <authorList>
            <person name="Ding F."/>
            <person name="Tang P."/>
            <person name="Hsu M.-H."/>
            <person name="Cui P."/>
            <person name="Hu S."/>
            <person name="Yu J."/>
            <person name="Chiu C.-H."/>
        </authorList>
    </citation>
    <scope>NUCLEOTIDE SEQUENCE [LARGE SCALE GENOMIC DNA]</scope>
    <source>
        <strain>CGSP14</strain>
    </source>
</reference>
<name>YIDD_STRPS</name>
<feature type="chain" id="PRO_1000197786" description="Putative membrane protein insertion efficiency factor">
    <location>
        <begin position="1"/>
        <end position="80"/>
    </location>
</feature>
<feature type="region of interest" description="Disordered" evidence="2">
    <location>
        <begin position="61"/>
        <end position="80"/>
    </location>
</feature>
<feature type="compositionally biased region" description="Basic and acidic residues" evidence="2">
    <location>
        <begin position="62"/>
        <end position="80"/>
    </location>
</feature>
<evidence type="ECO:0000255" key="1">
    <source>
        <dbReference type="HAMAP-Rule" id="MF_00386"/>
    </source>
</evidence>
<evidence type="ECO:0000256" key="2">
    <source>
        <dbReference type="SAM" id="MobiDB-lite"/>
    </source>
</evidence>
<gene>
    <name type="ordered locus">SPCG_1846</name>
</gene>
<comment type="function">
    <text evidence="1">Could be involved in insertion of integral membrane proteins into the membrane.</text>
</comment>
<comment type="subcellular location">
    <subcellularLocation>
        <location evidence="1">Cell membrane</location>
        <topology evidence="1">Peripheral membrane protein</topology>
        <orientation evidence="1">Cytoplasmic side</orientation>
    </subcellularLocation>
</comment>
<comment type="similarity">
    <text evidence="1">Belongs to the UPF0161 family.</text>
</comment>
<accession>B2ISX1</accession>